<sequence length="306" mass="34486">MTTIFHADDLLHALQQAKTEKNFSSVFSLDWDKLRIAKRNTSVKYVTVHVMVKGKKAPLMFNFQNEKHVGTISPSTDEEVIRMNAENPKFLVKKRDRDPCLQFNKYKISPPLEDDGFTVKKNEQGEEIYPGDEEKSKLFQIIELLEEAFEDAVQKGPENMKTKNIIKLVQRKISSNAAKNADKSLPNPIARIRIKVNPITNMLAPVLLDKSKPITLQNGKTSFEELKDKDGVKANPDNIHKLIESHSIHDGIINARSICISSMGISFPLCLEMGVVKVFEKNNGIDVDSIYGPDEITNLINQVTIA</sequence>
<feature type="chain" id="PRO_0000373635" description="Uncharacterized protein CP312R">
    <location>
        <begin position="1"/>
        <end position="306"/>
    </location>
</feature>
<comment type="subcellular location">
    <subcellularLocation>
        <location evidence="1">Virion</location>
    </subcellularLocation>
</comment>
<comment type="induction">
    <text evidence="2">Expressed in the early phase of the viral replicative cycle.</text>
</comment>
<comment type="similarity">
    <text evidence="2">Belongs to the asfivirus CP312R family.</text>
</comment>
<gene>
    <name type="ordered locus">Ken-108</name>
</gene>
<protein>
    <recommendedName>
        <fullName>Uncharacterized protein CP312R</fullName>
        <shortName>pCP312R</shortName>
    </recommendedName>
</protein>
<dbReference type="EMBL" id="AY261360">
    <property type="status" value="NOT_ANNOTATED_CDS"/>
    <property type="molecule type" value="Genomic_DNA"/>
</dbReference>
<dbReference type="SMR" id="P0CAD1"/>
<dbReference type="Proteomes" id="UP000000861">
    <property type="component" value="Segment"/>
</dbReference>
<dbReference type="GO" id="GO:0044423">
    <property type="term" value="C:virion component"/>
    <property type="evidence" value="ECO:0007669"/>
    <property type="project" value="UniProtKB-KW"/>
</dbReference>
<name>VF312_ASFK5</name>
<evidence type="ECO:0000250" key="1">
    <source>
        <dbReference type="UniProtKB" id="Q65180"/>
    </source>
</evidence>
<evidence type="ECO:0000305" key="2"/>
<reference key="1">
    <citation type="submission" date="2003-03" db="EMBL/GenBank/DDBJ databases">
        <title>African swine fever virus genomes.</title>
        <authorList>
            <person name="Kutish G.F."/>
            <person name="Rock D.L."/>
        </authorList>
    </citation>
    <scope>NUCLEOTIDE SEQUENCE [LARGE SCALE GENOMIC DNA]</scope>
</reference>
<organism>
    <name type="scientific">African swine fever virus (isolate Pig/Kenya/KEN-50/1950)</name>
    <name type="common">ASFV</name>
    <dbReference type="NCBI Taxonomy" id="561445"/>
    <lineage>
        <taxon>Viruses</taxon>
        <taxon>Varidnaviria</taxon>
        <taxon>Bamfordvirae</taxon>
        <taxon>Nucleocytoviricota</taxon>
        <taxon>Pokkesviricetes</taxon>
        <taxon>Asfuvirales</taxon>
        <taxon>Asfarviridae</taxon>
        <taxon>Asfivirus</taxon>
        <taxon>African swine fever virus</taxon>
    </lineage>
</organism>
<keyword id="KW-0244">Early protein</keyword>
<keyword id="KW-0946">Virion</keyword>
<proteinExistence type="inferred from homology"/>
<organismHost>
    <name type="scientific">Ornithodoros</name>
    <name type="common">relapsing fever ticks</name>
    <dbReference type="NCBI Taxonomy" id="6937"/>
</organismHost>
<organismHost>
    <name type="scientific">Phacochoerus aethiopicus</name>
    <name type="common">Warthog</name>
    <dbReference type="NCBI Taxonomy" id="85517"/>
</organismHost>
<organismHost>
    <name type="scientific">Phacochoerus africanus</name>
    <name type="common">Warthog</name>
    <dbReference type="NCBI Taxonomy" id="41426"/>
</organismHost>
<organismHost>
    <name type="scientific">Potamochoerus larvatus</name>
    <name type="common">Bushpig</name>
    <dbReference type="NCBI Taxonomy" id="273792"/>
</organismHost>
<organismHost>
    <name type="scientific">Sus scrofa</name>
    <name type="common">Pig</name>
    <dbReference type="NCBI Taxonomy" id="9823"/>
</organismHost>
<accession>P0CAD1</accession>